<reference key="1">
    <citation type="journal article" date="2007" name="PLoS ONE">
        <title>Molecular correlates of host specialization in Staphylococcus aureus.</title>
        <authorList>
            <person name="Herron-Olson L."/>
            <person name="Fitzgerald J.R."/>
            <person name="Musser J.M."/>
            <person name="Kapur V."/>
        </authorList>
    </citation>
    <scope>NUCLEOTIDE SEQUENCE [LARGE SCALE GENOMIC DNA]</scope>
    <source>
        <strain>bovine RF122 / ET3-1</strain>
    </source>
</reference>
<sequence length="320" mass="35624">MKMINKLIVPVTASALLLGACGASATDSKENTLISSKAGDVTVADTMKKIGKDQIANASFTEMLNKILADKYKNKVNDKKIDEQIEKMQKQYGGKDKFEKALQQQGLTADKYKENLRTAAYHKELLSDKIKISDSEIKEDSKKASHILIKVKSKKSDKEGLDDKEAKQKAEEIQKEVSKDPSKFGEIAKKESMDTGSAKKDGELGYVLKGQTDKDFEKALFKLKDGEVSDVVKSSFGYHIIKADKPTDFNSEKQSLKEKLVDQKVQKNPKLLTDAYKDLLKEYDVDFKDRDIKSVVEDKILNPEKLKQGGAQGGQSGMSQ</sequence>
<evidence type="ECO:0000255" key="1">
    <source>
        <dbReference type="HAMAP-Rule" id="MF_01145"/>
    </source>
</evidence>
<evidence type="ECO:0000256" key="2">
    <source>
        <dbReference type="SAM" id="MobiDB-lite"/>
    </source>
</evidence>
<keyword id="KW-1003">Cell membrane</keyword>
<keyword id="KW-0413">Isomerase</keyword>
<keyword id="KW-0449">Lipoprotein</keyword>
<keyword id="KW-0472">Membrane</keyword>
<keyword id="KW-0564">Palmitate</keyword>
<keyword id="KW-0697">Rotamase</keyword>
<keyword id="KW-0732">Signal</keyword>
<protein>
    <recommendedName>
        <fullName evidence="1">Foldase protein PrsA</fullName>
        <ecNumber evidence="1">5.2.1.8</ecNumber>
    </recommendedName>
</protein>
<gene>
    <name evidence="1" type="primary">prsA</name>
    <name type="ordered locus">SAB1774</name>
</gene>
<feature type="signal peptide" evidence="1">
    <location>
        <begin position="1"/>
        <end position="20"/>
    </location>
</feature>
<feature type="chain" id="PRO_1000085058" description="Foldase protein PrsA">
    <location>
        <begin position="21"/>
        <end position="320"/>
    </location>
</feature>
<feature type="domain" description="PpiC" evidence="1">
    <location>
        <begin position="139"/>
        <end position="245"/>
    </location>
</feature>
<feature type="region of interest" description="Disordered" evidence="2">
    <location>
        <begin position="159"/>
        <end position="198"/>
    </location>
</feature>
<feature type="lipid moiety-binding region" description="N-palmitoyl cysteine" evidence="1">
    <location>
        <position position="21"/>
    </location>
</feature>
<feature type="lipid moiety-binding region" description="S-diacylglycerol cysteine" evidence="1">
    <location>
        <position position="21"/>
    </location>
</feature>
<dbReference type="EC" id="5.2.1.8" evidence="1"/>
<dbReference type="EMBL" id="AJ938182">
    <property type="protein sequence ID" value="CAI81463.1"/>
    <property type="molecule type" value="Genomic_DNA"/>
</dbReference>
<dbReference type="RefSeq" id="WP_000782119.1">
    <property type="nucleotide sequence ID" value="NC_007622.1"/>
</dbReference>
<dbReference type="SMR" id="Q2YTZ6"/>
<dbReference type="KEGG" id="sab:SAB1774"/>
<dbReference type="HOGENOM" id="CLU_034646_6_2_9"/>
<dbReference type="GO" id="GO:0005886">
    <property type="term" value="C:plasma membrane"/>
    <property type="evidence" value="ECO:0007669"/>
    <property type="project" value="UniProtKB-SubCell"/>
</dbReference>
<dbReference type="GO" id="GO:0003755">
    <property type="term" value="F:peptidyl-prolyl cis-trans isomerase activity"/>
    <property type="evidence" value="ECO:0007669"/>
    <property type="project" value="UniProtKB-UniRule"/>
</dbReference>
<dbReference type="GO" id="GO:0006457">
    <property type="term" value="P:protein folding"/>
    <property type="evidence" value="ECO:0007669"/>
    <property type="project" value="UniProtKB-UniRule"/>
</dbReference>
<dbReference type="Gene3D" id="3.10.50.40">
    <property type="match status" value="1"/>
</dbReference>
<dbReference type="Gene3D" id="1.10.4030.10">
    <property type="entry name" value="Porin chaperone SurA, peptide-binding domain"/>
    <property type="match status" value="1"/>
</dbReference>
<dbReference type="HAMAP" id="MF_01145">
    <property type="entry name" value="Foldase_PrsA"/>
    <property type="match status" value="1"/>
</dbReference>
<dbReference type="InterPro" id="IPR023059">
    <property type="entry name" value="Foldase_PrsA"/>
</dbReference>
<dbReference type="InterPro" id="IPR046357">
    <property type="entry name" value="PPIase_dom_sf"/>
</dbReference>
<dbReference type="InterPro" id="IPR000297">
    <property type="entry name" value="PPIase_PpiC"/>
</dbReference>
<dbReference type="InterPro" id="IPR050245">
    <property type="entry name" value="PrsA_foldase"/>
</dbReference>
<dbReference type="InterPro" id="IPR027304">
    <property type="entry name" value="Trigger_fact/SurA_dom_sf"/>
</dbReference>
<dbReference type="PANTHER" id="PTHR47245:SF1">
    <property type="entry name" value="FOLDASE PROTEIN PRSA"/>
    <property type="match status" value="1"/>
</dbReference>
<dbReference type="PANTHER" id="PTHR47245">
    <property type="entry name" value="PEPTIDYLPROLYL ISOMERASE"/>
    <property type="match status" value="1"/>
</dbReference>
<dbReference type="Pfam" id="PF00639">
    <property type="entry name" value="Rotamase"/>
    <property type="match status" value="1"/>
</dbReference>
<dbReference type="SUPFAM" id="SSF54534">
    <property type="entry name" value="FKBP-like"/>
    <property type="match status" value="1"/>
</dbReference>
<dbReference type="SUPFAM" id="SSF109998">
    <property type="entry name" value="Triger factor/SurA peptide-binding domain-like"/>
    <property type="match status" value="1"/>
</dbReference>
<dbReference type="PROSITE" id="PS50198">
    <property type="entry name" value="PPIC_PPIASE_2"/>
    <property type="match status" value="1"/>
</dbReference>
<dbReference type="PROSITE" id="PS51257">
    <property type="entry name" value="PROKAR_LIPOPROTEIN"/>
    <property type="match status" value="1"/>
</dbReference>
<proteinExistence type="inferred from homology"/>
<name>PRSA_STAAB</name>
<accession>Q2YTZ6</accession>
<comment type="function">
    <text evidence="1">Plays a major role in protein secretion by helping the post-translocational extracellular folding of several secreted proteins.</text>
</comment>
<comment type="catalytic activity">
    <reaction evidence="1">
        <text>[protein]-peptidylproline (omega=180) = [protein]-peptidylproline (omega=0)</text>
        <dbReference type="Rhea" id="RHEA:16237"/>
        <dbReference type="Rhea" id="RHEA-COMP:10747"/>
        <dbReference type="Rhea" id="RHEA-COMP:10748"/>
        <dbReference type="ChEBI" id="CHEBI:83833"/>
        <dbReference type="ChEBI" id="CHEBI:83834"/>
        <dbReference type="EC" id="5.2.1.8"/>
    </reaction>
</comment>
<comment type="subcellular location">
    <subcellularLocation>
        <location evidence="1">Cell membrane</location>
        <topology evidence="1">Lipid-anchor</topology>
    </subcellularLocation>
</comment>
<comment type="similarity">
    <text evidence="1">Belongs to the PrsA family.</text>
</comment>
<organism>
    <name type="scientific">Staphylococcus aureus (strain bovine RF122 / ET3-1)</name>
    <dbReference type="NCBI Taxonomy" id="273036"/>
    <lineage>
        <taxon>Bacteria</taxon>
        <taxon>Bacillati</taxon>
        <taxon>Bacillota</taxon>
        <taxon>Bacilli</taxon>
        <taxon>Bacillales</taxon>
        <taxon>Staphylococcaceae</taxon>
        <taxon>Staphylococcus</taxon>
    </lineage>
</organism>